<gene>
    <name evidence="1" type="primary">bpt</name>
    <name type="ordered locus">Bxeno_A1929</name>
    <name type="ORF">Bxe_A2506</name>
</gene>
<keyword id="KW-0012">Acyltransferase</keyword>
<keyword id="KW-0963">Cytoplasm</keyword>
<keyword id="KW-1185">Reference proteome</keyword>
<keyword id="KW-0808">Transferase</keyword>
<protein>
    <recommendedName>
        <fullName evidence="1">Aspartate/glutamate leucyltransferase</fullName>
        <ecNumber evidence="1">2.3.2.29</ecNumber>
    </recommendedName>
</protein>
<feature type="chain" id="PRO_0000263180" description="Aspartate/glutamate leucyltransferase">
    <location>
        <begin position="1"/>
        <end position="279"/>
    </location>
</feature>
<reference key="1">
    <citation type="journal article" date="2006" name="Proc. Natl. Acad. Sci. U.S.A.">
        <title>Burkholderia xenovorans LB400 harbors a multi-replicon, 9.73-Mbp genome shaped for versatility.</title>
        <authorList>
            <person name="Chain P.S.G."/>
            <person name="Denef V.J."/>
            <person name="Konstantinidis K.T."/>
            <person name="Vergez L.M."/>
            <person name="Agullo L."/>
            <person name="Reyes V.L."/>
            <person name="Hauser L."/>
            <person name="Cordova M."/>
            <person name="Gomez L."/>
            <person name="Gonzalez M."/>
            <person name="Land M."/>
            <person name="Lao V."/>
            <person name="Larimer F."/>
            <person name="LiPuma J.J."/>
            <person name="Mahenthiralingam E."/>
            <person name="Malfatti S.A."/>
            <person name="Marx C.J."/>
            <person name="Parnell J.J."/>
            <person name="Ramette A."/>
            <person name="Richardson P."/>
            <person name="Seeger M."/>
            <person name="Smith D."/>
            <person name="Spilker T."/>
            <person name="Sul W.J."/>
            <person name="Tsoi T.V."/>
            <person name="Ulrich L.E."/>
            <person name="Zhulin I.B."/>
            <person name="Tiedje J.M."/>
        </authorList>
    </citation>
    <scope>NUCLEOTIDE SEQUENCE [LARGE SCALE GENOMIC DNA]</scope>
    <source>
        <strain>LB400</strain>
    </source>
</reference>
<sequence length="279" mass="32132">MTHPNELPLSPLSALQFYATAPYPCSYLDGRIARSQVATPSHLINSDVYTDLVKAGFRRSGVFTYRPYCDGCRACVPVRVPVDRFEPNRTQRRVWKKHGELIATVAPLHYDEEHYALYMRYQSARHAGGGMDRDSRDQYEQFLLQSRINSRLVEFREPPREWPEQPERPDAPGILRMISMIDILGDGLSSVYTFFEPGLPHTSFGTYNIYWQIEQARSLKLPYVYLGYWIRESPKMAYKANFHPLEGLIDGAWRVLDPTGLDLPPVDLAIHGKRPPFKP</sequence>
<comment type="function">
    <text evidence="1">Functions in the N-end rule pathway of protein degradation where it conjugates Leu from its aminoacyl-tRNA to the N-termini of proteins containing an N-terminal aspartate or glutamate.</text>
</comment>
<comment type="catalytic activity">
    <reaction evidence="1">
        <text>N-terminal L-glutamyl-[protein] + L-leucyl-tRNA(Leu) = N-terminal L-leucyl-L-glutamyl-[protein] + tRNA(Leu) + H(+)</text>
        <dbReference type="Rhea" id="RHEA:50412"/>
        <dbReference type="Rhea" id="RHEA-COMP:9613"/>
        <dbReference type="Rhea" id="RHEA-COMP:9622"/>
        <dbReference type="Rhea" id="RHEA-COMP:12664"/>
        <dbReference type="Rhea" id="RHEA-COMP:12668"/>
        <dbReference type="ChEBI" id="CHEBI:15378"/>
        <dbReference type="ChEBI" id="CHEBI:64721"/>
        <dbReference type="ChEBI" id="CHEBI:78442"/>
        <dbReference type="ChEBI" id="CHEBI:78494"/>
        <dbReference type="ChEBI" id="CHEBI:133041"/>
        <dbReference type="EC" id="2.3.2.29"/>
    </reaction>
</comment>
<comment type="catalytic activity">
    <reaction evidence="1">
        <text>N-terminal L-aspartyl-[protein] + L-leucyl-tRNA(Leu) = N-terminal L-leucyl-L-aspartyl-[protein] + tRNA(Leu) + H(+)</text>
        <dbReference type="Rhea" id="RHEA:50420"/>
        <dbReference type="Rhea" id="RHEA-COMP:9613"/>
        <dbReference type="Rhea" id="RHEA-COMP:9622"/>
        <dbReference type="Rhea" id="RHEA-COMP:12669"/>
        <dbReference type="Rhea" id="RHEA-COMP:12674"/>
        <dbReference type="ChEBI" id="CHEBI:15378"/>
        <dbReference type="ChEBI" id="CHEBI:64720"/>
        <dbReference type="ChEBI" id="CHEBI:78442"/>
        <dbReference type="ChEBI" id="CHEBI:78494"/>
        <dbReference type="ChEBI" id="CHEBI:133042"/>
        <dbReference type="EC" id="2.3.2.29"/>
    </reaction>
</comment>
<comment type="subcellular location">
    <subcellularLocation>
        <location evidence="1">Cytoplasm</location>
    </subcellularLocation>
</comment>
<comment type="similarity">
    <text evidence="1">Belongs to the R-transferase family. Bpt subfamily.</text>
</comment>
<dbReference type="EC" id="2.3.2.29" evidence="1"/>
<dbReference type="EMBL" id="CP000270">
    <property type="protein sequence ID" value="ABE30467.1"/>
    <property type="molecule type" value="Genomic_DNA"/>
</dbReference>
<dbReference type="RefSeq" id="WP_011488122.1">
    <property type="nucleotide sequence ID" value="NZ_CP008760.1"/>
</dbReference>
<dbReference type="SMR" id="Q13ZM2"/>
<dbReference type="STRING" id="266265.Bxe_A2506"/>
<dbReference type="KEGG" id="bxb:DR64_200"/>
<dbReference type="KEGG" id="bxe:Bxe_A2506"/>
<dbReference type="PATRIC" id="fig|266265.5.peg.2018"/>
<dbReference type="eggNOG" id="COG2935">
    <property type="taxonomic scope" value="Bacteria"/>
</dbReference>
<dbReference type="OrthoDB" id="9782022at2"/>
<dbReference type="Proteomes" id="UP000001817">
    <property type="component" value="Chromosome 1"/>
</dbReference>
<dbReference type="GO" id="GO:0005737">
    <property type="term" value="C:cytoplasm"/>
    <property type="evidence" value="ECO:0007669"/>
    <property type="project" value="UniProtKB-SubCell"/>
</dbReference>
<dbReference type="GO" id="GO:0004057">
    <property type="term" value="F:arginyl-tRNA--protein transferase activity"/>
    <property type="evidence" value="ECO:0007669"/>
    <property type="project" value="InterPro"/>
</dbReference>
<dbReference type="GO" id="GO:0008914">
    <property type="term" value="F:leucyl-tRNA--protein transferase activity"/>
    <property type="evidence" value="ECO:0007669"/>
    <property type="project" value="UniProtKB-UniRule"/>
</dbReference>
<dbReference type="GO" id="GO:0071596">
    <property type="term" value="P:ubiquitin-dependent protein catabolic process via the N-end rule pathway"/>
    <property type="evidence" value="ECO:0007669"/>
    <property type="project" value="InterPro"/>
</dbReference>
<dbReference type="HAMAP" id="MF_00689">
    <property type="entry name" value="Bpt"/>
    <property type="match status" value="1"/>
</dbReference>
<dbReference type="InterPro" id="IPR016181">
    <property type="entry name" value="Acyl_CoA_acyltransferase"/>
</dbReference>
<dbReference type="InterPro" id="IPR017138">
    <property type="entry name" value="Asp_Glu_LeuTrfase"/>
</dbReference>
<dbReference type="InterPro" id="IPR030700">
    <property type="entry name" value="N-end_Aminoacyl_Trfase"/>
</dbReference>
<dbReference type="InterPro" id="IPR007472">
    <property type="entry name" value="N-end_Aminoacyl_Trfase_C"/>
</dbReference>
<dbReference type="InterPro" id="IPR007471">
    <property type="entry name" value="N-end_Aminoacyl_Trfase_N"/>
</dbReference>
<dbReference type="NCBIfam" id="NF002341">
    <property type="entry name" value="PRK01305.1-1"/>
    <property type="match status" value="1"/>
</dbReference>
<dbReference type="NCBIfam" id="NF002342">
    <property type="entry name" value="PRK01305.1-3"/>
    <property type="match status" value="1"/>
</dbReference>
<dbReference type="NCBIfam" id="NF002346">
    <property type="entry name" value="PRK01305.2-3"/>
    <property type="match status" value="1"/>
</dbReference>
<dbReference type="PANTHER" id="PTHR21367">
    <property type="entry name" value="ARGININE-TRNA-PROTEIN TRANSFERASE 1"/>
    <property type="match status" value="1"/>
</dbReference>
<dbReference type="PANTHER" id="PTHR21367:SF1">
    <property type="entry name" value="ARGINYL-TRNA--PROTEIN TRANSFERASE 1"/>
    <property type="match status" value="1"/>
</dbReference>
<dbReference type="Pfam" id="PF04377">
    <property type="entry name" value="ATE_C"/>
    <property type="match status" value="1"/>
</dbReference>
<dbReference type="Pfam" id="PF04376">
    <property type="entry name" value="ATE_N"/>
    <property type="match status" value="1"/>
</dbReference>
<dbReference type="PIRSF" id="PIRSF037208">
    <property type="entry name" value="ATE_pro_prd"/>
    <property type="match status" value="1"/>
</dbReference>
<dbReference type="SUPFAM" id="SSF55729">
    <property type="entry name" value="Acyl-CoA N-acyltransferases (Nat)"/>
    <property type="match status" value="1"/>
</dbReference>
<name>BPT_PARXL</name>
<organism>
    <name type="scientific">Paraburkholderia xenovorans (strain LB400)</name>
    <dbReference type="NCBI Taxonomy" id="266265"/>
    <lineage>
        <taxon>Bacteria</taxon>
        <taxon>Pseudomonadati</taxon>
        <taxon>Pseudomonadota</taxon>
        <taxon>Betaproteobacteria</taxon>
        <taxon>Burkholderiales</taxon>
        <taxon>Burkholderiaceae</taxon>
        <taxon>Paraburkholderia</taxon>
    </lineage>
</organism>
<proteinExistence type="inferred from homology"/>
<accession>Q13ZM2</accession>
<evidence type="ECO:0000255" key="1">
    <source>
        <dbReference type="HAMAP-Rule" id="MF_00689"/>
    </source>
</evidence>